<proteinExistence type="evidence at protein level"/>
<name>YG1D_YEAST</name>
<protein>
    <recommendedName>
        <fullName>Probable transcriptional regulatory protein HAH1</fullName>
    </recommendedName>
</protein>
<dbReference type="EMBL" id="Z72806">
    <property type="protein sequence ID" value="CAA97004.1"/>
    <property type="molecule type" value="Genomic_DNA"/>
</dbReference>
<dbReference type="EMBL" id="BK006941">
    <property type="protein sequence ID" value="DAA08117.1"/>
    <property type="molecule type" value="Genomic_DNA"/>
</dbReference>
<dbReference type="PIR" id="S64312">
    <property type="entry name" value="S64312"/>
</dbReference>
<dbReference type="SMR" id="P53212"/>
<dbReference type="BioGRID" id="33263">
    <property type="interactions" value="129"/>
</dbReference>
<dbReference type="DIP" id="DIP-6261N"/>
<dbReference type="FunCoup" id="P53212">
    <property type="interactions" value="378"/>
</dbReference>
<dbReference type="IntAct" id="P53212">
    <property type="interactions" value="1"/>
</dbReference>
<dbReference type="MINT" id="P53212"/>
<dbReference type="STRING" id="4932.YGR021W"/>
<dbReference type="iPTMnet" id="P53212"/>
<dbReference type="PaxDb" id="4932-YGR021W"/>
<dbReference type="PeptideAtlas" id="P53212"/>
<dbReference type="EnsemblFungi" id="YGR021W_mRNA">
    <property type="protein sequence ID" value="YGR021W"/>
    <property type="gene ID" value="YGR021W"/>
</dbReference>
<dbReference type="KEGG" id="sce:YGR021W"/>
<dbReference type="AGR" id="SGD:S000003253"/>
<dbReference type="SGD" id="S000003253">
    <property type="gene designation" value="YGR021W"/>
</dbReference>
<dbReference type="VEuPathDB" id="FungiDB:YGR021W"/>
<dbReference type="eggNOG" id="KOG2972">
    <property type="taxonomic scope" value="Eukaryota"/>
</dbReference>
<dbReference type="GeneTree" id="ENSGT00390000012820"/>
<dbReference type="HOGENOM" id="CLU_062974_1_0_1"/>
<dbReference type="InParanoid" id="P53212"/>
<dbReference type="OMA" id="NFDIPDE"/>
<dbReference type="OrthoDB" id="2017544at2759"/>
<dbReference type="BioCyc" id="YEAST:G3O-30747-MONOMER"/>
<dbReference type="BioGRID-ORCS" id="852904">
    <property type="hits" value="2 hits in 10 CRISPR screens"/>
</dbReference>
<dbReference type="PRO" id="PR:P53212"/>
<dbReference type="Proteomes" id="UP000002311">
    <property type="component" value="Chromosome VII"/>
</dbReference>
<dbReference type="RNAct" id="P53212">
    <property type="molecule type" value="protein"/>
</dbReference>
<dbReference type="GO" id="GO:0099617">
    <property type="term" value="C:matrix side of mitochondrial inner membrane"/>
    <property type="evidence" value="ECO:0000314"/>
    <property type="project" value="SGD"/>
</dbReference>
<dbReference type="GO" id="GO:0005739">
    <property type="term" value="C:mitochondrion"/>
    <property type="evidence" value="ECO:0007005"/>
    <property type="project" value="SGD"/>
</dbReference>
<dbReference type="GO" id="GO:0032543">
    <property type="term" value="P:mitochondrial translation"/>
    <property type="evidence" value="ECO:0000315"/>
    <property type="project" value="SGD"/>
</dbReference>
<dbReference type="FunFam" id="1.10.10.200:FF:000002">
    <property type="entry name" value="Probable transcriptional regulatory protein CLM62_37755"/>
    <property type="match status" value="1"/>
</dbReference>
<dbReference type="Gene3D" id="1.10.10.200">
    <property type="match status" value="1"/>
</dbReference>
<dbReference type="Gene3D" id="3.30.70.980">
    <property type="match status" value="2"/>
</dbReference>
<dbReference type="HAMAP" id="MF_00693">
    <property type="entry name" value="Transcrip_reg_TACO1"/>
    <property type="match status" value="1"/>
</dbReference>
<dbReference type="InterPro" id="IPR017856">
    <property type="entry name" value="Integrase-like_N"/>
</dbReference>
<dbReference type="InterPro" id="IPR048300">
    <property type="entry name" value="TACO1_YebC-like_2nd/3rd_dom"/>
</dbReference>
<dbReference type="InterPro" id="IPR049083">
    <property type="entry name" value="TACO1_YebC_N"/>
</dbReference>
<dbReference type="InterPro" id="IPR002876">
    <property type="entry name" value="Transcrip_reg_TACO1-like"/>
</dbReference>
<dbReference type="InterPro" id="IPR026564">
    <property type="entry name" value="Transcrip_reg_TACO1-like_dom3"/>
</dbReference>
<dbReference type="InterPro" id="IPR029072">
    <property type="entry name" value="YebC-like"/>
</dbReference>
<dbReference type="PANTHER" id="PTHR12532">
    <property type="entry name" value="TRANSLATIONAL ACTIVATOR OF CYTOCHROME C OXIDASE 1"/>
    <property type="match status" value="1"/>
</dbReference>
<dbReference type="PANTHER" id="PTHR12532:SF0">
    <property type="entry name" value="TRANSLATIONAL ACTIVATOR OF CYTOCHROME C OXIDASE 1"/>
    <property type="match status" value="1"/>
</dbReference>
<dbReference type="Pfam" id="PF20772">
    <property type="entry name" value="TACO1_YebC_N"/>
    <property type="match status" value="1"/>
</dbReference>
<dbReference type="Pfam" id="PF01709">
    <property type="entry name" value="Transcrip_reg"/>
    <property type="match status" value="1"/>
</dbReference>
<dbReference type="SUPFAM" id="SSF75625">
    <property type="entry name" value="YebC-like"/>
    <property type="match status" value="1"/>
</dbReference>
<gene>
    <name type="ordered locus">YGR021W</name>
</gene>
<accession>P53212</accession>
<accession>D6VUF6</accession>
<reference key="1">
    <citation type="journal article" date="1997" name="Yeast">
        <title>Sequence analysis of 203 kilobases from Saccharomyces cerevisiae chromosome VII.</title>
        <authorList>
            <person name="Rieger M."/>
            <person name="Brueckner M."/>
            <person name="Schaefer M."/>
            <person name="Mueller-Auer S."/>
        </authorList>
    </citation>
    <scope>NUCLEOTIDE SEQUENCE [GENOMIC DNA]</scope>
    <source>
        <strain>ATCC 204508 / S288c</strain>
    </source>
</reference>
<reference key="2">
    <citation type="journal article" date="1997" name="Nature">
        <title>The nucleotide sequence of Saccharomyces cerevisiae chromosome VII.</title>
        <authorList>
            <person name="Tettelin H."/>
            <person name="Agostoni-Carbone M.L."/>
            <person name="Albermann K."/>
            <person name="Albers M."/>
            <person name="Arroyo J."/>
            <person name="Backes U."/>
            <person name="Barreiros T."/>
            <person name="Bertani I."/>
            <person name="Bjourson A.J."/>
            <person name="Brueckner M."/>
            <person name="Bruschi C.V."/>
            <person name="Carignani G."/>
            <person name="Castagnoli L."/>
            <person name="Cerdan E."/>
            <person name="Clemente M.L."/>
            <person name="Coblenz A."/>
            <person name="Coglievina M."/>
            <person name="Coissac E."/>
            <person name="Defoor E."/>
            <person name="Del Bino S."/>
            <person name="Delius H."/>
            <person name="Delneri D."/>
            <person name="de Wergifosse P."/>
            <person name="Dujon B."/>
            <person name="Durand P."/>
            <person name="Entian K.-D."/>
            <person name="Eraso P."/>
            <person name="Escribano V."/>
            <person name="Fabiani L."/>
            <person name="Fartmann B."/>
            <person name="Feroli F."/>
            <person name="Feuermann M."/>
            <person name="Frontali L."/>
            <person name="Garcia-Gonzalez M."/>
            <person name="Garcia-Saez M.I."/>
            <person name="Goffeau A."/>
            <person name="Guerreiro P."/>
            <person name="Hani J."/>
            <person name="Hansen M."/>
            <person name="Hebling U."/>
            <person name="Hernandez K."/>
            <person name="Heumann K."/>
            <person name="Hilger F."/>
            <person name="Hofmann B."/>
            <person name="Indge K.J."/>
            <person name="James C.M."/>
            <person name="Klima R."/>
            <person name="Koetter P."/>
            <person name="Kramer B."/>
            <person name="Kramer W."/>
            <person name="Lauquin G."/>
            <person name="Leuther H."/>
            <person name="Louis E.J."/>
            <person name="Maillier E."/>
            <person name="Marconi A."/>
            <person name="Martegani E."/>
            <person name="Mazon M.J."/>
            <person name="Mazzoni C."/>
            <person name="McReynolds A.D.K."/>
            <person name="Melchioretto P."/>
            <person name="Mewes H.-W."/>
            <person name="Minenkova O."/>
            <person name="Mueller-Auer S."/>
            <person name="Nawrocki A."/>
            <person name="Netter P."/>
            <person name="Neu R."/>
            <person name="Nombela C."/>
            <person name="Oliver S.G."/>
            <person name="Panzeri L."/>
            <person name="Paoluzi S."/>
            <person name="Plevani P."/>
            <person name="Portetelle D."/>
            <person name="Portillo F."/>
            <person name="Potier S."/>
            <person name="Purnelle B."/>
            <person name="Rieger M."/>
            <person name="Riles L."/>
            <person name="Rinaldi T."/>
            <person name="Robben J."/>
            <person name="Rodrigues-Pousada C."/>
            <person name="Rodriguez-Belmonte E."/>
            <person name="Rodriguez-Torres A.M."/>
            <person name="Rose M."/>
            <person name="Ruzzi M."/>
            <person name="Saliola M."/>
            <person name="Sanchez-Perez M."/>
            <person name="Schaefer B."/>
            <person name="Schaefer M."/>
            <person name="Scharfe M."/>
            <person name="Schmidheini T."/>
            <person name="Schreer A."/>
            <person name="Skala J."/>
            <person name="Souciet J.-L."/>
            <person name="Steensma H.Y."/>
            <person name="Talla E."/>
            <person name="Thierry A."/>
            <person name="Vandenbol M."/>
            <person name="van der Aart Q.J.M."/>
            <person name="Van Dyck L."/>
            <person name="Vanoni M."/>
            <person name="Verhasselt P."/>
            <person name="Voet M."/>
            <person name="Volckaert G."/>
            <person name="Wambutt R."/>
            <person name="Watson M.D."/>
            <person name="Weber N."/>
            <person name="Wedler E."/>
            <person name="Wedler H."/>
            <person name="Wipfli P."/>
            <person name="Wolf K."/>
            <person name="Wright L.F."/>
            <person name="Zaccaria P."/>
            <person name="Zimmermann M."/>
            <person name="Zollner A."/>
            <person name="Kleine K."/>
        </authorList>
    </citation>
    <scope>NUCLEOTIDE SEQUENCE [LARGE SCALE GENOMIC DNA]</scope>
    <source>
        <strain>ATCC 204508 / S288c</strain>
    </source>
</reference>
<reference key="3">
    <citation type="journal article" date="2014" name="G3 (Bethesda)">
        <title>The reference genome sequence of Saccharomyces cerevisiae: Then and now.</title>
        <authorList>
            <person name="Engel S.R."/>
            <person name="Dietrich F.S."/>
            <person name="Fisk D.G."/>
            <person name="Binkley G."/>
            <person name="Balakrishnan R."/>
            <person name="Costanzo M.C."/>
            <person name="Dwight S.S."/>
            <person name="Hitz B.C."/>
            <person name="Karra K."/>
            <person name="Nash R.S."/>
            <person name="Weng S."/>
            <person name="Wong E.D."/>
            <person name="Lloyd P."/>
            <person name="Skrzypek M.S."/>
            <person name="Miyasato S.R."/>
            <person name="Simison M."/>
            <person name="Cherry J.M."/>
        </authorList>
    </citation>
    <scope>GENOME REANNOTATION</scope>
    <source>
        <strain>ATCC 204508 / S288c</strain>
    </source>
</reference>
<reference key="4">
    <citation type="journal article" date="2003" name="Nature">
        <title>Global analysis of protein expression in yeast.</title>
        <authorList>
            <person name="Ghaemmaghami S."/>
            <person name="Huh W.-K."/>
            <person name="Bower K."/>
            <person name="Howson R.W."/>
            <person name="Belle A."/>
            <person name="Dephoure N."/>
            <person name="O'Shea E.K."/>
            <person name="Weissman J.S."/>
        </authorList>
    </citation>
    <scope>LEVEL OF PROTEIN EXPRESSION [LARGE SCALE ANALYSIS]</scope>
</reference>
<reference key="5">
    <citation type="journal article" date="2006" name="J. Proteome Res.">
        <title>Toward the complete yeast mitochondrial proteome: multidimensional separation techniques for mitochondrial proteomics.</title>
        <authorList>
            <person name="Reinders J."/>
            <person name="Zahedi R.P."/>
            <person name="Pfanner N."/>
            <person name="Meisinger C."/>
            <person name="Sickmann A."/>
        </authorList>
    </citation>
    <scope>SUBCELLULAR LOCATION [LARGE SCALE ANALYSIS]</scope>
    <scope>IDENTIFICATION BY MASS SPECTROMETRY</scope>
</reference>
<feature type="chain" id="PRO_0000175945" description="Probable transcriptional regulatory protein HAH1">
    <location>
        <begin position="1"/>
        <end position="290"/>
    </location>
</feature>
<evidence type="ECO:0000269" key="1">
    <source>
    </source>
</evidence>
<evidence type="ECO:0000269" key="2">
    <source>
    </source>
</evidence>
<evidence type="ECO:0000305" key="3"/>
<sequence length="290" mass="31700">MLVRNRYLGELLKNSRSFSVLNSSVRSGHNKWSTIKHGKAKNDAERNKINNKFANQIAMSVKLGNGITDPSMNIRLATSIELANKNNVSKKVIENAIRKASGSSASGKDSNASELCVYEGMGPGGVAIVVEALTDNKNRTIGLIRSAFNKANGSMTPTLFFFDKKGYVTMVPPKMLDTEDKVLESVLEIQGIEDIAPVQEDAEDLECDTETETTGQTYEAVMEPADTNKVAALLKERGFHIRDLGIGYNAKPDMEVFVQGDETLEKLQKLTTALEDIDEVTSLYTNASNA</sequence>
<keyword id="KW-0496">Mitochondrion</keyword>
<keyword id="KW-1185">Reference proteome</keyword>
<comment type="subcellular location">
    <subcellularLocation>
        <location evidence="2">Mitochondrion</location>
    </subcellularLocation>
</comment>
<comment type="miscellaneous">
    <text evidence="1">Present with 1780 molecules/cell in log phase SD medium.</text>
</comment>
<comment type="similarity">
    <text evidence="3">Belongs to the TACO1 family.</text>
</comment>
<organism>
    <name type="scientific">Saccharomyces cerevisiae (strain ATCC 204508 / S288c)</name>
    <name type="common">Baker's yeast</name>
    <dbReference type="NCBI Taxonomy" id="559292"/>
    <lineage>
        <taxon>Eukaryota</taxon>
        <taxon>Fungi</taxon>
        <taxon>Dikarya</taxon>
        <taxon>Ascomycota</taxon>
        <taxon>Saccharomycotina</taxon>
        <taxon>Saccharomycetes</taxon>
        <taxon>Saccharomycetales</taxon>
        <taxon>Saccharomycetaceae</taxon>
        <taxon>Saccharomyces</taxon>
    </lineage>
</organism>